<proteinExistence type="inferred from homology"/>
<gene>
    <name type="primary">DPH4</name>
    <name type="ordered locus">YALI0E06545g</name>
</gene>
<organism>
    <name type="scientific">Yarrowia lipolytica (strain CLIB 122 / E 150)</name>
    <name type="common">Yeast</name>
    <name type="synonym">Candida lipolytica</name>
    <dbReference type="NCBI Taxonomy" id="284591"/>
    <lineage>
        <taxon>Eukaryota</taxon>
        <taxon>Fungi</taxon>
        <taxon>Dikarya</taxon>
        <taxon>Ascomycota</taxon>
        <taxon>Saccharomycotina</taxon>
        <taxon>Dipodascomycetes</taxon>
        <taxon>Dipodascales</taxon>
        <taxon>Dipodascales incertae sedis</taxon>
        <taxon>Yarrowia</taxon>
    </lineage>
</organism>
<reference key="1">
    <citation type="journal article" date="2004" name="Nature">
        <title>Genome evolution in yeasts.</title>
        <authorList>
            <person name="Dujon B."/>
            <person name="Sherman D."/>
            <person name="Fischer G."/>
            <person name="Durrens P."/>
            <person name="Casaregola S."/>
            <person name="Lafontaine I."/>
            <person name="de Montigny J."/>
            <person name="Marck C."/>
            <person name="Neuveglise C."/>
            <person name="Talla E."/>
            <person name="Goffard N."/>
            <person name="Frangeul L."/>
            <person name="Aigle M."/>
            <person name="Anthouard V."/>
            <person name="Babour A."/>
            <person name="Barbe V."/>
            <person name="Barnay S."/>
            <person name="Blanchin S."/>
            <person name="Beckerich J.-M."/>
            <person name="Beyne E."/>
            <person name="Bleykasten C."/>
            <person name="Boisrame A."/>
            <person name="Boyer J."/>
            <person name="Cattolico L."/>
            <person name="Confanioleri F."/>
            <person name="de Daruvar A."/>
            <person name="Despons L."/>
            <person name="Fabre E."/>
            <person name="Fairhead C."/>
            <person name="Ferry-Dumazet H."/>
            <person name="Groppi A."/>
            <person name="Hantraye F."/>
            <person name="Hennequin C."/>
            <person name="Jauniaux N."/>
            <person name="Joyet P."/>
            <person name="Kachouri R."/>
            <person name="Kerrest A."/>
            <person name="Koszul R."/>
            <person name="Lemaire M."/>
            <person name="Lesur I."/>
            <person name="Ma L."/>
            <person name="Muller H."/>
            <person name="Nicaud J.-M."/>
            <person name="Nikolski M."/>
            <person name="Oztas S."/>
            <person name="Ozier-Kalogeropoulos O."/>
            <person name="Pellenz S."/>
            <person name="Potier S."/>
            <person name="Richard G.-F."/>
            <person name="Straub M.-L."/>
            <person name="Suleau A."/>
            <person name="Swennen D."/>
            <person name="Tekaia F."/>
            <person name="Wesolowski-Louvel M."/>
            <person name="Westhof E."/>
            <person name="Wirth B."/>
            <person name="Zeniou-Meyer M."/>
            <person name="Zivanovic Y."/>
            <person name="Bolotin-Fukuhara M."/>
            <person name="Thierry A."/>
            <person name="Bouchier C."/>
            <person name="Caudron B."/>
            <person name="Scarpelli C."/>
            <person name="Gaillardin C."/>
            <person name="Weissenbach J."/>
            <person name="Wincker P."/>
            <person name="Souciet J.-L."/>
        </authorList>
    </citation>
    <scope>NUCLEOTIDE SEQUENCE [LARGE SCALE GENOMIC DNA]</scope>
    <source>
        <strain>CLIB 122 / E 150</strain>
    </source>
</reference>
<evidence type="ECO:0000250" key="1"/>
<evidence type="ECO:0000255" key="2">
    <source>
        <dbReference type="PROSITE-ProRule" id="PRU00286"/>
    </source>
</evidence>
<evidence type="ECO:0000255" key="3">
    <source>
        <dbReference type="PROSITE-ProRule" id="PRU00456"/>
    </source>
</evidence>
<evidence type="ECO:0000305" key="4"/>
<name>DPH4_YARLI</name>
<protein>
    <recommendedName>
        <fullName>Diphthamide biosynthesis protein 4</fullName>
    </recommendedName>
</protein>
<keyword id="KW-0963">Cytoplasm</keyword>
<keyword id="KW-0408">Iron</keyword>
<keyword id="KW-0479">Metal-binding</keyword>
<keyword id="KW-0539">Nucleus</keyword>
<keyword id="KW-1185">Reference proteome</keyword>
<keyword id="KW-0862">Zinc</keyword>
<feature type="chain" id="PRO_0000071153" description="Diphthamide biosynthesis protein 4">
    <location>
        <begin position="1"/>
        <end position="163"/>
    </location>
</feature>
<feature type="domain" description="J" evidence="2">
    <location>
        <begin position="2"/>
        <end position="74"/>
    </location>
</feature>
<feature type="domain" description="DPH-type MB" evidence="3">
    <location>
        <begin position="89"/>
        <end position="159"/>
    </location>
</feature>
<feature type="binding site" evidence="3">
    <location>
        <position position="111"/>
    </location>
    <ligand>
        <name>Zn(2+)</name>
        <dbReference type="ChEBI" id="CHEBI:29105"/>
    </ligand>
</feature>
<feature type="binding site" evidence="3">
    <location>
        <position position="113"/>
    </location>
    <ligand>
        <name>Zn(2+)</name>
        <dbReference type="ChEBI" id="CHEBI:29105"/>
    </ligand>
</feature>
<feature type="binding site" evidence="3">
    <location>
        <position position="147"/>
    </location>
    <ligand>
        <name>Zn(2+)</name>
        <dbReference type="ChEBI" id="CHEBI:29105"/>
    </ligand>
</feature>
<feature type="binding site" evidence="3">
    <location>
        <position position="150"/>
    </location>
    <ligand>
        <name>Zn(2+)</name>
        <dbReference type="ChEBI" id="CHEBI:29105"/>
    </ligand>
</feature>
<dbReference type="EMBL" id="CR382131">
    <property type="protein sequence ID" value="CAG79213.1"/>
    <property type="molecule type" value="Genomic_DNA"/>
</dbReference>
<dbReference type="RefSeq" id="XP_503631.1">
    <property type="nucleotide sequence ID" value="XM_503631.1"/>
</dbReference>
<dbReference type="FunCoup" id="Q6C6T1">
    <property type="interactions" value="370"/>
</dbReference>
<dbReference type="STRING" id="284591.Q6C6T1"/>
<dbReference type="EnsemblFungi" id="CAG79213">
    <property type="protein sequence ID" value="CAG79213"/>
    <property type="gene ID" value="YALI0_E06545g"/>
</dbReference>
<dbReference type="KEGG" id="yli:2912398"/>
<dbReference type="VEuPathDB" id="FungiDB:YALI0_E06545g"/>
<dbReference type="HOGENOM" id="CLU_017633_7_0_1"/>
<dbReference type="InParanoid" id="Q6C6T1"/>
<dbReference type="OMA" id="IIGCRGC"/>
<dbReference type="OrthoDB" id="106715at4891"/>
<dbReference type="UniPathway" id="UPA00559"/>
<dbReference type="Proteomes" id="UP000001300">
    <property type="component" value="Chromosome E"/>
</dbReference>
<dbReference type="GO" id="GO:0005737">
    <property type="term" value="C:cytoplasm"/>
    <property type="evidence" value="ECO:0007669"/>
    <property type="project" value="UniProtKB-SubCell"/>
</dbReference>
<dbReference type="GO" id="GO:0005634">
    <property type="term" value="C:nucleus"/>
    <property type="evidence" value="ECO:0007669"/>
    <property type="project" value="UniProtKB-SubCell"/>
</dbReference>
<dbReference type="GO" id="GO:0046872">
    <property type="term" value="F:metal ion binding"/>
    <property type="evidence" value="ECO:0007669"/>
    <property type="project" value="UniProtKB-KW"/>
</dbReference>
<dbReference type="GO" id="GO:0017183">
    <property type="term" value="P:protein histidyl modification to diphthamide"/>
    <property type="evidence" value="ECO:0007669"/>
    <property type="project" value="UniProtKB-UniPathway"/>
</dbReference>
<dbReference type="CDD" id="cd06257">
    <property type="entry name" value="DnaJ"/>
    <property type="match status" value="1"/>
</dbReference>
<dbReference type="FunFam" id="3.10.660.10:FF:000010">
    <property type="entry name" value="Diphthamide biosynthesis protein 4"/>
    <property type="match status" value="1"/>
</dbReference>
<dbReference type="Gene3D" id="1.10.287.110">
    <property type="entry name" value="DnaJ domain"/>
    <property type="match status" value="1"/>
</dbReference>
<dbReference type="Gene3D" id="3.10.660.10">
    <property type="entry name" value="DPH Zinc finger"/>
    <property type="match status" value="1"/>
</dbReference>
<dbReference type="InterPro" id="IPR001623">
    <property type="entry name" value="DnaJ_domain"/>
</dbReference>
<dbReference type="InterPro" id="IPR044248">
    <property type="entry name" value="DPH3/4-like"/>
</dbReference>
<dbReference type="InterPro" id="IPR007872">
    <property type="entry name" value="DPH_MB_dom"/>
</dbReference>
<dbReference type="InterPro" id="IPR036671">
    <property type="entry name" value="DPH_MB_sf"/>
</dbReference>
<dbReference type="InterPro" id="IPR036869">
    <property type="entry name" value="J_dom_sf"/>
</dbReference>
<dbReference type="PANTHER" id="PTHR21454:SF46">
    <property type="entry name" value="DIPHTHAMIDE BIOSYNTHESIS PROTEIN 4"/>
    <property type="match status" value="1"/>
</dbReference>
<dbReference type="PANTHER" id="PTHR21454">
    <property type="entry name" value="DPH3 HOMOLOG-RELATED"/>
    <property type="match status" value="1"/>
</dbReference>
<dbReference type="Pfam" id="PF00226">
    <property type="entry name" value="DnaJ"/>
    <property type="match status" value="1"/>
</dbReference>
<dbReference type="Pfam" id="PF05207">
    <property type="entry name" value="Zn_ribbon_CSL"/>
    <property type="match status" value="1"/>
</dbReference>
<dbReference type="SMART" id="SM00271">
    <property type="entry name" value="DnaJ"/>
    <property type="match status" value="1"/>
</dbReference>
<dbReference type="SUPFAM" id="SSF46565">
    <property type="entry name" value="Chaperone J-domain"/>
    <property type="match status" value="1"/>
</dbReference>
<dbReference type="SUPFAM" id="SSF144217">
    <property type="entry name" value="CSL zinc finger"/>
    <property type="match status" value="1"/>
</dbReference>
<dbReference type="PROSITE" id="PS50076">
    <property type="entry name" value="DNAJ_2"/>
    <property type="match status" value="1"/>
</dbReference>
<dbReference type="PROSITE" id="PS51074">
    <property type="entry name" value="DPH_MB"/>
    <property type="match status" value="1"/>
</dbReference>
<comment type="function">
    <text evidence="1">Required for the first step of diphthamide biosynthesis, the transfer of 3-amino-3-carboxypropyl from S-adenosyl-L-methionine to a histidine residue. Diphthamide is a post-translational modification of histidine which occurs in elongation factor 2 (By similarity).</text>
</comment>
<comment type="pathway">
    <text>Protein modification; peptidyl-diphthamide biosynthesis.</text>
</comment>
<comment type="subcellular location">
    <subcellularLocation>
        <location evidence="1">Cytoplasm</location>
    </subcellularLocation>
    <subcellularLocation>
        <location evidence="1">Nucleus</location>
    </subcellularLocation>
</comment>
<comment type="domain">
    <text evidence="3">The DPH-type metal-binding (MB) domain can bind either zinc or iron ions.</text>
</comment>
<comment type="similarity">
    <text evidence="4">Belongs to the DPH4 family.</text>
</comment>
<accession>Q6C6T1</accession>
<sequence length="163" mass="18232">MNHYTILGLSEPPHVPELTSADLKTAYKQALLKNHPDKLQEREAYTGSVQITAITTAYACLSNSKLKKEYDLSLKNGANGVKSGPGSDVFDLTELEEREDADGMFSWYKPCRCGEAGGYVLTEEHLENNEKYYEGVDVQFHEIVVQCGTCSLWITVQYGVEEE</sequence>